<gene>
    <name evidence="1" type="primary">atpE</name>
    <name type="ordered locus">E2348C_4047</name>
</gene>
<proteinExistence type="inferred from homology"/>
<comment type="function">
    <text evidence="1">F(1)F(0) ATP synthase produces ATP from ADP in the presence of a proton or sodium gradient. F-type ATPases consist of two structural domains, F(1) containing the extramembraneous catalytic core and F(0) containing the membrane proton channel, linked together by a central stalk and a peripheral stalk. During catalysis, ATP synthesis in the catalytic domain of F(1) is coupled via a rotary mechanism of the central stalk subunits to proton translocation.</text>
</comment>
<comment type="function">
    <text evidence="1">Key component of the F(0) channel; it plays a direct role in translocation across the membrane. A homomeric c-ring of between 10-14 subunits forms the central stalk rotor element with the F(1) delta and epsilon subunits.</text>
</comment>
<comment type="subunit">
    <text evidence="1">F-type ATPases have 2 components, F(1) - the catalytic core - and F(0) - the membrane proton channel. F(1) has five subunits: alpha(3), beta(3), gamma(1), delta(1), epsilon(1). F(0) has three main subunits: a(1), b(2) and c(10-14). The alpha and beta chains form an alternating ring which encloses part of the gamma chain. F(1) is attached to F(0) by a central stalk formed by the gamma and epsilon chains, while a peripheral stalk is formed by the delta and b chains.</text>
</comment>
<comment type="subcellular location">
    <subcellularLocation>
        <location evidence="1">Cell inner membrane</location>
        <topology evidence="1">Multi-pass membrane protein</topology>
    </subcellularLocation>
</comment>
<comment type="similarity">
    <text evidence="1">Belongs to the ATPase C chain family.</text>
</comment>
<organism>
    <name type="scientific">Escherichia coli O127:H6 (strain E2348/69 / EPEC)</name>
    <dbReference type="NCBI Taxonomy" id="574521"/>
    <lineage>
        <taxon>Bacteria</taxon>
        <taxon>Pseudomonadati</taxon>
        <taxon>Pseudomonadota</taxon>
        <taxon>Gammaproteobacteria</taxon>
        <taxon>Enterobacterales</taxon>
        <taxon>Enterobacteriaceae</taxon>
        <taxon>Escherichia</taxon>
    </lineage>
</organism>
<keyword id="KW-0066">ATP synthesis</keyword>
<keyword id="KW-0997">Cell inner membrane</keyword>
<keyword id="KW-1003">Cell membrane</keyword>
<keyword id="KW-0138">CF(0)</keyword>
<keyword id="KW-0375">Hydrogen ion transport</keyword>
<keyword id="KW-0406">Ion transport</keyword>
<keyword id="KW-0446">Lipid-binding</keyword>
<keyword id="KW-0472">Membrane</keyword>
<keyword id="KW-1185">Reference proteome</keyword>
<keyword id="KW-0812">Transmembrane</keyword>
<keyword id="KW-1133">Transmembrane helix</keyword>
<keyword id="KW-0813">Transport</keyword>
<accession>B7UMK2</accession>
<feature type="chain" id="PRO_1000184361" description="ATP synthase subunit c">
    <location>
        <begin position="1"/>
        <end position="79"/>
    </location>
</feature>
<feature type="transmembrane region" description="Helical" evidence="1">
    <location>
        <begin position="11"/>
        <end position="31"/>
    </location>
</feature>
<feature type="transmembrane region" description="Helical" evidence="1">
    <location>
        <begin position="53"/>
        <end position="73"/>
    </location>
</feature>
<feature type="site" description="Reversibly protonated during proton transport" evidence="1">
    <location>
        <position position="61"/>
    </location>
</feature>
<protein>
    <recommendedName>
        <fullName evidence="1">ATP synthase subunit c</fullName>
    </recommendedName>
    <alternativeName>
        <fullName evidence="1">ATP synthase F(0) sector subunit c</fullName>
    </alternativeName>
    <alternativeName>
        <fullName evidence="1">F-type ATPase subunit c</fullName>
        <shortName evidence="1">F-ATPase subunit c</shortName>
    </alternativeName>
    <alternativeName>
        <fullName evidence="1">Lipid-binding protein</fullName>
    </alternativeName>
</protein>
<reference key="1">
    <citation type="journal article" date="2009" name="J. Bacteriol.">
        <title>Complete genome sequence and comparative genome analysis of enteropathogenic Escherichia coli O127:H6 strain E2348/69.</title>
        <authorList>
            <person name="Iguchi A."/>
            <person name="Thomson N.R."/>
            <person name="Ogura Y."/>
            <person name="Saunders D."/>
            <person name="Ooka T."/>
            <person name="Henderson I.R."/>
            <person name="Harris D."/>
            <person name="Asadulghani M."/>
            <person name="Kurokawa K."/>
            <person name="Dean P."/>
            <person name="Kenny B."/>
            <person name="Quail M.A."/>
            <person name="Thurston S."/>
            <person name="Dougan G."/>
            <person name="Hayashi T."/>
            <person name="Parkhill J."/>
            <person name="Frankel G."/>
        </authorList>
    </citation>
    <scope>NUCLEOTIDE SEQUENCE [LARGE SCALE GENOMIC DNA]</scope>
    <source>
        <strain>E2348/69 / EPEC</strain>
    </source>
</reference>
<name>ATPL_ECO27</name>
<dbReference type="EMBL" id="FM180568">
    <property type="protein sequence ID" value="CAS11595.1"/>
    <property type="molecule type" value="Genomic_DNA"/>
</dbReference>
<dbReference type="RefSeq" id="WP_000429386.1">
    <property type="nucleotide sequence ID" value="NC_011601.1"/>
</dbReference>
<dbReference type="SMR" id="B7UMK2"/>
<dbReference type="GeneID" id="98390858"/>
<dbReference type="KEGG" id="ecg:E2348C_4047"/>
<dbReference type="HOGENOM" id="CLU_148047_1_0_6"/>
<dbReference type="Proteomes" id="UP000008205">
    <property type="component" value="Chromosome"/>
</dbReference>
<dbReference type="GO" id="GO:0005886">
    <property type="term" value="C:plasma membrane"/>
    <property type="evidence" value="ECO:0007669"/>
    <property type="project" value="UniProtKB-SubCell"/>
</dbReference>
<dbReference type="GO" id="GO:0045259">
    <property type="term" value="C:proton-transporting ATP synthase complex"/>
    <property type="evidence" value="ECO:0007669"/>
    <property type="project" value="UniProtKB-KW"/>
</dbReference>
<dbReference type="GO" id="GO:0033177">
    <property type="term" value="C:proton-transporting two-sector ATPase complex, proton-transporting domain"/>
    <property type="evidence" value="ECO:0007669"/>
    <property type="project" value="InterPro"/>
</dbReference>
<dbReference type="GO" id="GO:0008289">
    <property type="term" value="F:lipid binding"/>
    <property type="evidence" value="ECO:0007669"/>
    <property type="project" value="UniProtKB-KW"/>
</dbReference>
<dbReference type="GO" id="GO:0046933">
    <property type="term" value="F:proton-transporting ATP synthase activity, rotational mechanism"/>
    <property type="evidence" value="ECO:0007669"/>
    <property type="project" value="UniProtKB-UniRule"/>
</dbReference>
<dbReference type="CDD" id="cd18185">
    <property type="entry name" value="ATP-synt_Fo_c_ATPE"/>
    <property type="match status" value="1"/>
</dbReference>
<dbReference type="FunFam" id="1.20.20.10:FF:000002">
    <property type="entry name" value="ATP synthase subunit c"/>
    <property type="match status" value="1"/>
</dbReference>
<dbReference type="Gene3D" id="1.20.20.10">
    <property type="entry name" value="F1F0 ATP synthase subunit C"/>
    <property type="match status" value="1"/>
</dbReference>
<dbReference type="HAMAP" id="MF_01396">
    <property type="entry name" value="ATP_synth_c_bact"/>
    <property type="match status" value="1"/>
</dbReference>
<dbReference type="InterPro" id="IPR005953">
    <property type="entry name" value="ATP_synth_csu_bac/chlpt"/>
</dbReference>
<dbReference type="InterPro" id="IPR000454">
    <property type="entry name" value="ATP_synth_F0_csu"/>
</dbReference>
<dbReference type="InterPro" id="IPR020537">
    <property type="entry name" value="ATP_synth_F0_csu_DDCD_BS"/>
</dbReference>
<dbReference type="InterPro" id="IPR038662">
    <property type="entry name" value="ATP_synth_F0_csu_sf"/>
</dbReference>
<dbReference type="InterPro" id="IPR002379">
    <property type="entry name" value="ATPase_proteolipid_c-like_dom"/>
</dbReference>
<dbReference type="InterPro" id="IPR035921">
    <property type="entry name" value="F/V-ATP_Csub_sf"/>
</dbReference>
<dbReference type="NCBIfam" id="TIGR01260">
    <property type="entry name" value="ATP_synt_c"/>
    <property type="match status" value="1"/>
</dbReference>
<dbReference type="NCBIfam" id="NF005363">
    <property type="entry name" value="PRK06876.1"/>
    <property type="match status" value="1"/>
</dbReference>
<dbReference type="Pfam" id="PF00137">
    <property type="entry name" value="ATP-synt_C"/>
    <property type="match status" value="1"/>
</dbReference>
<dbReference type="PRINTS" id="PR00124">
    <property type="entry name" value="ATPASEC"/>
</dbReference>
<dbReference type="SUPFAM" id="SSF81333">
    <property type="entry name" value="F1F0 ATP synthase subunit C"/>
    <property type="match status" value="1"/>
</dbReference>
<dbReference type="PROSITE" id="PS00605">
    <property type="entry name" value="ATPASE_C"/>
    <property type="match status" value="1"/>
</dbReference>
<sequence>MENLNMDLLYMAAAVMMGLAAIGAAIGIGILGGKFLEGAARQPDLIPLLRTQFFIVMGLVDAIPMIAVGLGLYVMFAVA</sequence>
<evidence type="ECO:0000255" key="1">
    <source>
        <dbReference type="HAMAP-Rule" id="MF_01396"/>
    </source>
</evidence>